<proteinExistence type="evidence at protein level"/>
<keyword id="KW-0002">3D-structure</keyword>
<keyword id="KW-0539">Nucleus</keyword>
<keyword id="KW-1267">Proteomics identification</keyword>
<keyword id="KW-1185">Reference proteome</keyword>
<sequence length="506" mass="56500">MASGDLYEVERIVDKRKNKKGKWEYLIRWKGYGSTEDTWEPEHHLLHCEEFIDEFNGLHMSKDKRIKSGKQSSTSKLLRDSRGPSVEKLSHRPSDPGKSKGTSHKRKRINPPLAKPKKGYSGKPSSGGDRATKTVSYRTTPSGLQIMPLKKSQNGMENGDAGSEKDERHFGNGSHQPGLDLNDHVGEQDMGECDVNHATLAENGLGSALTNGGLNLHSPVKRKLEAEKDYVFDKRLRYSVRQNESNCRFRDIVVRKEEGFTHILLSSQTSDNNALTPEIMKEVRRALCNAATDDSKLLLLSAVGSVFCSGLDYSYLIGRLSSDRRKESTRIAEAIRDFVKAFIQFKKPIVVAINGPALGLGASILPLCDIVWASEKAWFQTPYATIRLTPAGCSSYTFPQILGVALANEMLFCGRKLTAQEACSRGLVSQVFWPTTFSQEVMLRVKEMASCSAVVLEESKCLVRSFLKSVLEDVNEKECLMLKQLWSSSKGLDSLFSYLQDKIYEV</sequence>
<evidence type="ECO:0000250" key="1"/>
<evidence type="ECO:0000255" key="2">
    <source>
        <dbReference type="PROSITE-ProRule" id="PRU00053"/>
    </source>
</evidence>
<evidence type="ECO:0000256" key="3">
    <source>
        <dbReference type="SAM" id="MobiDB-lite"/>
    </source>
</evidence>
<evidence type="ECO:0000269" key="4">
    <source>
    </source>
</evidence>
<evidence type="ECO:0000305" key="5"/>
<evidence type="ECO:0007829" key="6">
    <source>
        <dbReference type="PDB" id="2MJ8"/>
    </source>
</evidence>
<evidence type="ECO:0007829" key="7">
    <source>
        <dbReference type="PDB" id="8SP6"/>
    </source>
</evidence>
<accession>Q8N8U2</accession>
<accession>Q7Z5I8</accession>
<comment type="subunit">
    <text evidence="1">Interacts (via chromo domain) with histone H3K9me3.</text>
</comment>
<comment type="interaction">
    <interactant intactId="EBI-8467076">
        <id>Q8N8U2</id>
    </interactant>
    <interactant intactId="EBI-739789">
        <id>Q92997</id>
        <label>DVL3</label>
    </interactant>
    <organismsDiffer>false</organismsDiffer>
    <experiments>3</experiments>
</comment>
<comment type="interaction">
    <interactant intactId="EBI-8467076">
        <id>Q8N8U2</id>
    </interactant>
    <interactant intactId="EBI-7116203">
        <id>O75031</id>
        <label>HSF2BP</label>
    </interactant>
    <organismsDiffer>false</organismsDiffer>
    <experiments>3</experiments>
</comment>
<comment type="interaction">
    <interactant intactId="EBI-8467076">
        <id>Q8N8U2</id>
    </interactant>
    <interactant intactId="EBI-11742507">
        <id>Q8TAP4-4</id>
        <label>LMO3</label>
    </interactant>
    <organismsDiffer>false</organismsDiffer>
    <experiments>3</experiments>
</comment>
<comment type="interaction">
    <interactant intactId="EBI-8467076">
        <id>Q8N8U2</id>
    </interactant>
    <interactant intactId="EBI-398874">
        <id>Q9UBU9</id>
        <label>NXF1</label>
    </interactant>
    <organismsDiffer>false</organismsDiffer>
    <experiments>3</experiments>
</comment>
<comment type="interaction">
    <interactant intactId="EBI-8467076">
        <id>Q8N8U2</id>
    </interactant>
    <interactant intactId="EBI-351098">
        <id>O14744</id>
        <label>PRMT5</label>
    </interactant>
    <organismsDiffer>false</organismsDiffer>
    <experiments>2</experiments>
</comment>
<comment type="interaction">
    <interactant intactId="EBI-8467076">
        <id>Q8N8U2</id>
    </interactant>
    <interactant intactId="EBI-12023934">
        <id>Q5MJ10</id>
        <label>SPANXN2</label>
    </interactant>
    <organismsDiffer>false</organismsDiffer>
    <experiments>3</experiments>
</comment>
<comment type="interaction">
    <interactant intactId="EBI-8467076">
        <id>Q8N8U2</id>
    </interactant>
    <interactant intactId="EBI-395708">
        <id>Q96C00</id>
        <label>ZBTB9</label>
    </interactant>
    <organismsDiffer>false</organismsDiffer>
    <experiments>3</experiments>
</comment>
<comment type="subcellular location">
    <subcellularLocation>
        <location evidence="1">Nucleus</location>
    </subcellularLocation>
</comment>
<comment type="tissue specificity">
    <text evidence="4">Ubiquitously expressed.</text>
</comment>
<feature type="chain" id="PRO_0000080223" description="Chromodomain Y-like protein 2">
    <location>
        <begin position="1"/>
        <end position="506"/>
    </location>
</feature>
<feature type="domain" description="Chromo" evidence="2">
    <location>
        <begin position="7"/>
        <end position="67"/>
    </location>
</feature>
<feature type="region of interest" description="Disordered" evidence="3">
    <location>
        <begin position="64"/>
        <end position="177"/>
    </location>
</feature>
<feature type="compositionally biased region" description="Basic and acidic residues" evidence="3">
    <location>
        <begin position="88"/>
        <end position="98"/>
    </location>
</feature>
<feature type="compositionally biased region" description="Basic residues" evidence="3">
    <location>
        <begin position="101"/>
        <end position="120"/>
    </location>
</feature>
<feature type="compositionally biased region" description="Polar residues" evidence="3">
    <location>
        <begin position="133"/>
        <end position="143"/>
    </location>
</feature>
<feature type="sequence conflict" description="In Ref. 2; BAC04720." evidence="5" ref="2">
    <original>N</original>
    <variation>D</variation>
    <location>
        <position position="196"/>
    </location>
</feature>
<feature type="strand" evidence="7">
    <location>
        <begin position="9"/>
        <end position="17"/>
    </location>
</feature>
<feature type="strand" evidence="7">
    <location>
        <begin position="23"/>
        <end position="29"/>
    </location>
</feature>
<feature type="turn" evidence="6">
    <location>
        <begin position="30"/>
        <end position="32"/>
    </location>
</feature>
<feature type="helix" evidence="7">
    <location>
        <begin position="34"/>
        <end position="36"/>
    </location>
</feature>
<feature type="strand" evidence="7">
    <location>
        <begin position="38"/>
        <end position="41"/>
    </location>
</feature>
<feature type="helix" evidence="7">
    <location>
        <begin position="42"/>
        <end position="44"/>
    </location>
</feature>
<feature type="strand" evidence="7">
    <location>
        <begin position="45"/>
        <end position="47"/>
    </location>
</feature>
<feature type="helix" evidence="7">
    <location>
        <begin position="49"/>
        <end position="56"/>
    </location>
</feature>
<organism>
    <name type="scientific">Homo sapiens</name>
    <name type="common">Human</name>
    <dbReference type="NCBI Taxonomy" id="9606"/>
    <lineage>
        <taxon>Eukaryota</taxon>
        <taxon>Metazoa</taxon>
        <taxon>Chordata</taxon>
        <taxon>Craniata</taxon>
        <taxon>Vertebrata</taxon>
        <taxon>Euteleostomi</taxon>
        <taxon>Mammalia</taxon>
        <taxon>Eutheria</taxon>
        <taxon>Euarchontoglires</taxon>
        <taxon>Primates</taxon>
        <taxon>Haplorrhini</taxon>
        <taxon>Catarrhini</taxon>
        <taxon>Hominidae</taxon>
        <taxon>Homo</taxon>
    </lineage>
</organism>
<reference key="1">
    <citation type="journal article" date="2003" name="Hum. Mol. Genet.">
        <title>The CDY-related gene family: coordinated evolution in copy number, expression profile and protein sequence.</title>
        <authorList>
            <person name="Dorus S."/>
            <person name="Gilbert S.L."/>
            <person name="Forster M.L."/>
            <person name="Barndt R.J."/>
            <person name="Lahn B.T."/>
        </authorList>
    </citation>
    <scope>NUCLEOTIDE SEQUENCE [MRNA]</scope>
    <scope>TISSUE SPECIFICITY</scope>
</reference>
<reference key="2">
    <citation type="journal article" date="2004" name="Nat. Genet.">
        <title>Complete sequencing and characterization of 21,243 full-length human cDNAs.</title>
        <authorList>
            <person name="Ota T."/>
            <person name="Suzuki Y."/>
            <person name="Nishikawa T."/>
            <person name="Otsuki T."/>
            <person name="Sugiyama T."/>
            <person name="Irie R."/>
            <person name="Wakamatsu A."/>
            <person name="Hayashi K."/>
            <person name="Sato H."/>
            <person name="Nagai K."/>
            <person name="Kimura K."/>
            <person name="Makita H."/>
            <person name="Sekine M."/>
            <person name="Obayashi M."/>
            <person name="Nishi T."/>
            <person name="Shibahara T."/>
            <person name="Tanaka T."/>
            <person name="Ishii S."/>
            <person name="Yamamoto J."/>
            <person name="Saito K."/>
            <person name="Kawai Y."/>
            <person name="Isono Y."/>
            <person name="Nakamura Y."/>
            <person name="Nagahari K."/>
            <person name="Murakami K."/>
            <person name="Yasuda T."/>
            <person name="Iwayanagi T."/>
            <person name="Wagatsuma M."/>
            <person name="Shiratori A."/>
            <person name="Sudo H."/>
            <person name="Hosoiri T."/>
            <person name="Kaku Y."/>
            <person name="Kodaira H."/>
            <person name="Kondo H."/>
            <person name="Sugawara M."/>
            <person name="Takahashi M."/>
            <person name="Kanda K."/>
            <person name="Yokoi T."/>
            <person name="Furuya T."/>
            <person name="Kikkawa E."/>
            <person name="Omura Y."/>
            <person name="Abe K."/>
            <person name="Kamihara K."/>
            <person name="Katsuta N."/>
            <person name="Sato K."/>
            <person name="Tanikawa M."/>
            <person name="Yamazaki M."/>
            <person name="Ninomiya K."/>
            <person name="Ishibashi T."/>
            <person name="Yamashita H."/>
            <person name="Murakawa K."/>
            <person name="Fujimori K."/>
            <person name="Tanai H."/>
            <person name="Kimata M."/>
            <person name="Watanabe M."/>
            <person name="Hiraoka S."/>
            <person name="Chiba Y."/>
            <person name="Ishida S."/>
            <person name="Ono Y."/>
            <person name="Takiguchi S."/>
            <person name="Watanabe S."/>
            <person name="Yosida M."/>
            <person name="Hotuta T."/>
            <person name="Kusano J."/>
            <person name="Kanehori K."/>
            <person name="Takahashi-Fujii A."/>
            <person name="Hara H."/>
            <person name="Tanase T.-O."/>
            <person name="Nomura Y."/>
            <person name="Togiya S."/>
            <person name="Komai F."/>
            <person name="Hara R."/>
            <person name="Takeuchi K."/>
            <person name="Arita M."/>
            <person name="Imose N."/>
            <person name="Musashino K."/>
            <person name="Yuuki H."/>
            <person name="Oshima A."/>
            <person name="Sasaki N."/>
            <person name="Aotsuka S."/>
            <person name="Yoshikawa Y."/>
            <person name="Matsunawa H."/>
            <person name="Ichihara T."/>
            <person name="Shiohata N."/>
            <person name="Sano S."/>
            <person name="Moriya S."/>
            <person name="Momiyama H."/>
            <person name="Satoh N."/>
            <person name="Takami S."/>
            <person name="Terashima Y."/>
            <person name="Suzuki O."/>
            <person name="Nakagawa S."/>
            <person name="Senoh A."/>
            <person name="Mizoguchi H."/>
            <person name="Goto Y."/>
            <person name="Shimizu F."/>
            <person name="Wakebe H."/>
            <person name="Hishigaki H."/>
            <person name="Watanabe T."/>
            <person name="Sugiyama A."/>
            <person name="Takemoto M."/>
            <person name="Kawakami B."/>
            <person name="Yamazaki M."/>
            <person name="Watanabe K."/>
            <person name="Kumagai A."/>
            <person name="Itakura S."/>
            <person name="Fukuzumi Y."/>
            <person name="Fujimori Y."/>
            <person name="Komiyama M."/>
            <person name="Tashiro H."/>
            <person name="Tanigami A."/>
            <person name="Fujiwara T."/>
            <person name="Ono T."/>
            <person name="Yamada K."/>
            <person name="Fujii Y."/>
            <person name="Ozaki K."/>
            <person name="Hirao M."/>
            <person name="Ohmori Y."/>
            <person name="Kawabata A."/>
            <person name="Hikiji T."/>
            <person name="Kobatake N."/>
            <person name="Inagaki H."/>
            <person name="Ikema Y."/>
            <person name="Okamoto S."/>
            <person name="Okitani R."/>
            <person name="Kawakami T."/>
            <person name="Noguchi S."/>
            <person name="Itoh T."/>
            <person name="Shigeta K."/>
            <person name="Senba T."/>
            <person name="Matsumura K."/>
            <person name="Nakajima Y."/>
            <person name="Mizuno T."/>
            <person name="Morinaga M."/>
            <person name="Sasaki M."/>
            <person name="Togashi T."/>
            <person name="Oyama M."/>
            <person name="Hata H."/>
            <person name="Watanabe M."/>
            <person name="Komatsu T."/>
            <person name="Mizushima-Sugano J."/>
            <person name="Satoh T."/>
            <person name="Shirai Y."/>
            <person name="Takahashi Y."/>
            <person name="Nakagawa K."/>
            <person name="Okumura K."/>
            <person name="Nagase T."/>
            <person name="Nomura N."/>
            <person name="Kikuchi H."/>
            <person name="Masuho Y."/>
            <person name="Yamashita R."/>
            <person name="Nakai K."/>
            <person name="Yada T."/>
            <person name="Nakamura Y."/>
            <person name="Ohara O."/>
            <person name="Isogai T."/>
            <person name="Sugano S."/>
        </authorList>
    </citation>
    <scope>NUCLEOTIDE SEQUENCE [LARGE SCALE MRNA]</scope>
</reference>
<reference key="3">
    <citation type="journal article" date="2004" name="Nature">
        <title>The sequence and analysis of duplication-rich human chromosome 16.</title>
        <authorList>
            <person name="Martin J."/>
            <person name="Han C."/>
            <person name="Gordon L.A."/>
            <person name="Terry A."/>
            <person name="Prabhakar S."/>
            <person name="She X."/>
            <person name="Xie G."/>
            <person name="Hellsten U."/>
            <person name="Chan Y.M."/>
            <person name="Altherr M."/>
            <person name="Couronne O."/>
            <person name="Aerts A."/>
            <person name="Bajorek E."/>
            <person name="Black S."/>
            <person name="Blumer H."/>
            <person name="Branscomb E."/>
            <person name="Brown N.C."/>
            <person name="Bruno W.J."/>
            <person name="Buckingham J.M."/>
            <person name="Callen D.F."/>
            <person name="Campbell C.S."/>
            <person name="Campbell M.L."/>
            <person name="Campbell E.W."/>
            <person name="Caoile C."/>
            <person name="Challacombe J.F."/>
            <person name="Chasteen L.A."/>
            <person name="Chertkov O."/>
            <person name="Chi H.C."/>
            <person name="Christensen M."/>
            <person name="Clark L.M."/>
            <person name="Cohn J.D."/>
            <person name="Denys M."/>
            <person name="Detter J.C."/>
            <person name="Dickson M."/>
            <person name="Dimitrijevic-Bussod M."/>
            <person name="Escobar J."/>
            <person name="Fawcett J.J."/>
            <person name="Flowers D."/>
            <person name="Fotopulos D."/>
            <person name="Glavina T."/>
            <person name="Gomez M."/>
            <person name="Gonzales E."/>
            <person name="Goodstein D."/>
            <person name="Goodwin L.A."/>
            <person name="Grady D.L."/>
            <person name="Grigoriev I."/>
            <person name="Groza M."/>
            <person name="Hammon N."/>
            <person name="Hawkins T."/>
            <person name="Haydu L."/>
            <person name="Hildebrand C.E."/>
            <person name="Huang W."/>
            <person name="Israni S."/>
            <person name="Jett J."/>
            <person name="Jewett P.B."/>
            <person name="Kadner K."/>
            <person name="Kimball H."/>
            <person name="Kobayashi A."/>
            <person name="Krawczyk M.-C."/>
            <person name="Leyba T."/>
            <person name="Longmire J.L."/>
            <person name="Lopez F."/>
            <person name="Lou Y."/>
            <person name="Lowry S."/>
            <person name="Ludeman T."/>
            <person name="Manohar C.F."/>
            <person name="Mark G.A."/>
            <person name="McMurray K.L."/>
            <person name="Meincke L.J."/>
            <person name="Morgan J."/>
            <person name="Moyzis R.K."/>
            <person name="Mundt M.O."/>
            <person name="Munk A.C."/>
            <person name="Nandkeshwar R.D."/>
            <person name="Pitluck S."/>
            <person name="Pollard M."/>
            <person name="Predki P."/>
            <person name="Parson-Quintana B."/>
            <person name="Ramirez L."/>
            <person name="Rash S."/>
            <person name="Retterer J."/>
            <person name="Ricke D.O."/>
            <person name="Robinson D.L."/>
            <person name="Rodriguez A."/>
            <person name="Salamov A."/>
            <person name="Saunders E.H."/>
            <person name="Scott D."/>
            <person name="Shough T."/>
            <person name="Stallings R.L."/>
            <person name="Stalvey M."/>
            <person name="Sutherland R.D."/>
            <person name="Tapia R."/>
            <person name="Tesmer J.G."/>
            <person name="Thayer N."/>
            <person name="Thompson L.S."/>
            <person name="Tice H."/>
            <person name="Torney D.C."/>
            <person name="Tran-Gyamfi M."/>
            <person name="Tsai M."/>
            <person name="Ulanovsky L.E."/>
            <person name="Ustaszewska A."/>
            <person name="Vo N."/>
            <person name="White P.S."/>
            <person name="Williams A.L."/>
            <person name="Wills P.L."/>
            <person name="Wu J.-R."/>
            <person name="Wu K."/>
            <person name="Yang J."/>
            <person name="DeJong P."/>
            <person name="Bruce D."/>
            <person name="Doggett N.A."/>
            <person name="Deaven L."/>
            <person name="Schmutz J."/>
            <person name="Grimwood J."/>
            <person name="Richardson P."/>
            <person name="Rokhsar D.S."/>
            <person name="Eichler E.E."/>
            <person name="Gilna P."/>
            <person name="Lucas S.M."/>
            <person name="Myers R.M."/>
            <person name="Rubin E.M."/>
            <person name="Pennacchio L.A."/>
        </authorList>
    </citation>
    <scope>NUCLEOTIDE SEQUENCE [LARGE SCALE GENOMIC DNA]</scope>
</reference>
<reference key="4">
    <citation type="journal article" date="2004" name="Genome Res.">
        <title>The status, quality, and expansion of the NIH full-length cDNA project: the Mammalian Gene Collection (MGC).</title>
        <authorList>
            <consortium name="The MGC Project Team"/>
        </authorList>
    </citation>
    <scope>NUCLEOTIDE SEQUENCE [LARGE SCALE MRNA]</scope>
</reference>
<protein>
    <recommendedName>
        <fullName>Chromodomain Y-like protein 2</fullName>
        <shortName>CDY-like 2</shortName>
    </recommendedName>
</protein>
<dbReference type="EMBL" id="AY273798">
    <property type="protein sequence ID" value="AAP83842.1"/>
    <property type="molecule type" value="mRNA"/>
</dbReference>
<dbReference type="EMBL" id="AK096185">
    <property type="protein sequence ID" value="BAC04720.1"/>
    <property type="molecule type" value="mRNA"/>
</dbReference>
<dbReference type="EMBL" id="AC092332">
    <property type="status" value="NOT_ANNOTATED_CDS"/>
    <property type="molecule type" value="Genomic_DNA"/>
</dbReference>
<dbReference type="EMBL" id="BC069440">
    <property type="protein sequence ID" value="AAH69440.1"/>
    <property type="molecule type" value="mRNA"/>
</dbReference>
<dbReference type="EMBL" id="BC100803">
    <property type="protein sequence ID" value="AAI00804.1"/>
    <property type="molecule type" value="mRNA"/>
</dbReference>
<dbReference type="EMBL" id="BC100804">
    <property type="protein sequence ID" value="AAI00805.1"/>
    <property type="molecule type" value="mRNA"/>
</dbReference>
<dbReference type="EMBL" id="BC100805">
    <property type="protein sequence ID" value="AAI00806.1"/>
    <property type="molecule type" value="mRNA"/>
</dbReference>
<dbReference type="EMBL" id="BC100806">
    <property type="protein sequence ID" value="AAI00807.1"/>
    <property type="molecule type" value="mRNA"/>
</dbReference>
<dbReference type="CCDS" id="CCDS32493.1"/>
<dbReference type="RefSeq" id="NP_689555.2">
    <property type="nucleotide sequence ID" value="NM_152342.4"/>
</dbReference>
<dbReference type="PDB" id="2MJ8">
    <property type="method" value="NMR"/>
    <property type="chains" value="A=2-64"/>
</dbReference>
<dbReference type="PDB" id="4HAE">
    <property type="method" value="X-ray"/>
    <property type="resolution" value="2.00 A"/>
    <property type="chains" value="A=2-64"/>
</dbReference>
<dbReference type="PDB" id="5JJZ">
    <property type="method" value="X-ray"/>
    <property type="resolution" value="2.00 A"/>
    <property type="chains" value="A=2-66"/>
</dbReference>
<dbReference type="PDB" id="6V2D">
    <property type="method" value="X-ray"/>
    <property type="resolution" value="2.10 A"/>
    <property type="chains" value="A/C/E/G/I/K=2-64"/>
</dbReference>
<dbReference type="PDB" id="6V2H">
    <property type="method" value="X-ray"/>
    <property type="resolution" value="2.60 A"/>
    <property type="chains" value="A/C/E/G/I/K=2-62"/>
</dbReference>
<dbReference type="PDB" id="6V3N">
    <property type="method" value="X-ray"/>
    <property type="resolution" value="2.70 A"/>
    <property type="chains" value="A/B=2-64"/>
</dbReference>
<dbReference type="PDB" id="6V8W">
    <property type="method" value="X-ray"/>
    <property type="resolution" value="2.80 A"/>
    <property type="chains" value="A/B/C/D/E/F/G/H/I/J/K/L/M/N/O/P/Q/R/S/T/U/V/W/X/Y/Z=2-62"/>
</dbReference>
<dbReference type="PDB" id="8SP6">
    <property type="method" value="X-ray"/>
    <property type="resolution" value="1.45 A"/>
    <property type="chains" value="A/B/C/D/E/F=2-62"/>
</dbReference>
<dbReference type="PDBsum" id="2MJ8"/>
<dbReference type="PDBsum" id="4HAE"/>
<dbReference type="PDBsum" id="5JJZ"/>
<dbReference type="PDBsum" id="6V2D"/>
<dbReference type="PDBsum" id="6V2H"/>
<dbReference type="PDBsum" id="6V3N"/>
<dbReference type="PDBsum" id="6V8W"/>
<dbReference type="PDBsum" id="8SP6"/>
<dbReference type="BMRB" id="Q8N8U2"/>
<dbReference type="SMR" id="Q8N8U2"/>
<dbReference type="BioGRID" id="125860">
    <property type="interactions" value="23"/>
</dbReference>
<dbReference type="FunCoup" id="Q8N8U2">
    <property type="interactions" value="577"/>
</dbReference>
<dbReference type="IntAct" id="Q8N8U2">
    <property type="interactions" value="16"/>
</dbReference>
<dbReference type="MINT" id="Q8N8U2"/>
<dbReference type="STRING" id="9606.ENSP00000476295"/>
<dbReference type="BindingDB" id="Q8N8U2"/>
<dbReference type="ChEMBL" id="CHEMBL3879857"/>
<dbReference type="GlyGen" id="Q8N8U2">
    <property type="glycosylation" value="1 site, 1 O-linked glycan (1 site)"/>
</dbReference>
<dbReference type="iPTMnet" id="Q8N8U2"/>
<dbReference type="PhosphoSitePlus" id="Q8N8U2"/>
<dbReference type="SwissPalm" id="Q8N8U2"/>
<dbReference type="BioMuta" id="CDYL2"/>
<dbReference type="DMDM" id="229462825"/>
<dbReference type="jPOST" id="Q8N8U2"/>
<dbReference type="MassIVE" id="Q8N8U2"/>
<dbReference type="PaxDb" id="9606-ENSP00000476295"/>
<dbReference type="PeptideAtlas" id="Q8N8U2"/>
<dbReference type="ProteomicsDB" id="72459"/>
<dbReference type="Pumba" id="Q8N8U2"/>
<dbReference type="ABCD" id="Q8N8U2">
    <property type="antibodies" value="1 sequenced antibody"/>
</dbReference>
<dbReference type="Antibodypedia" id="30424">
    <property type="antibodies" value="97 antibodies from 23 providers"/>
</dbReference>
<dbReference type="DNASU" id="124359"/>
<dbReference type="Ensembl" id="ENST00000570137.7">
    <property type="protein sequence ID" value="ENSP00000476295.1"/>
    <property type="gene ID" value="ENSG00000166446.15"/>
</dbReference>
<dbReference type="GeneID" id="124359"/>
<dbReference type="KEGG" id="hsa:124359"/>
<dbReference type="MANE-Select" id="ENST00000570137.7">
    <property type="protein sequence ID" value="ENSP00000476295.1"/>
    <property type="RefSeq nucleotide sequence ID" value="NM_152342.4"/>
    <property type="RefSeq protein sequence ID" value="NP_689555.2"/>
</dbReference>
<dbReference type="UCSC" id="uc002ffs.4">
    <property type="organism name" value="human"/>
</dbReference>
<dbReference type="AGR" id="HGNC:23030"/>
<dbReference type="CTD" id="124359"/>
<dbReference type="DisGeNET" id="124359"/>
<dbReference type="GeneCards" id="CDYL2"/>
<dbReference type="HGNC" id="HGNC:23030">
    <property type="gene designation" value="CDYL2"/>
</dbReference>
<dbReference type="HPA" id="ENSG00000166446">
    <property type="expression patterns" value="Tissue enhanced (brain)"/>
</dbReference>
<dbReference type="MIM" id="618816">
    <property type="type" value="gene"/>
</dbReference>
<dbReference type="neXtProt" id="NX_Q8N8U2"/>
<dbReference type="OpenTargets" id="ENSG00000166446"/>
<dbReference type="PharmGKB" id="PA134903387"/>
<dbReference type="VEuPathDB" id="HostDB:ENSG00000166446"/>
<dbReference type="eggNOG" id="KOG0016">
    <property type="taxonomic scope" value="Eukaryota"/>
</dbReference>
<dbReference type="eggNOG" id="KOG1911">
    <property type="taxonomic scope" value="Eukaryota"/>
</dbReference>
<dbReference type="GeneTree" id="ENSGT00940000159646"/>
<dbReference type="HOGENOM" id="CLU_009834_24_0_1"/>
<dbReference type="InParanoid" id="Q8N8U2"/>
<dbReference type="OMA" id="QASTPKF"/>
<dbReference type="OrthoDB" id="6357915at2759"/>
<dbReference type="PAN-GO" id="Q8N8U2">
    <property type="GO annotations" value="2 GO annotations based on evolutionary models"/>
</dbReference>
<dbReference type="PhylomeDB" id="Q8N8U2"/>
<dbReference type="TreeFam" id="TF313375"/>
<dbReference type="PathwayCommons" id="Q8N8U2"/>
<dbReference type="SignaLink" id="Q8N8U2"/>
<dbReference type="BioGRID-ORCS" id="124359">
    <property type="hits" value="10 hits in 1155 CRISPR screens"/>
</dbReference>
<dbReference type="ChiTaRS" id="CDYL2">
    <property type="organism name" value="human"/>
</dbReference>
<dbReference type="EvolutionaryTrace" id="Q8N8U2"/>
<dbReference type="GenomeRNAi" id="124359"/>
<dbReference type="Pharos" id="Q8N8U2">
    <property type="development level" value="Tchem"/>
</dbReference>
<dbReference type="PRO" id="PR:Q8N8U2"/>
<dbReference type="Proteomes" id="UP000005640">
    <property type="component" value="Chromosome 16"/>
</dbReference>
<dbReference type="RNAct" id="Q8N8U2">
    <property type="molecule type" value="protein"/>
</dbReference>
<dbReference type="Bgee" id="ENSG00000166446">
    <property type="expression patterns" value="Expressed in cerebellar vermis and 173 other cell types or tissues"/>
</dbReference>
<dbReference type="ExpressionAtlas" id="Q8N8U2">
    <property type="expression patterns" value="baseline and differential"/>
</dbReference>
<dbReference type="GO" id="GO:0005634">
    <property type="term" value="C:nucleus"/>
    <property type="evidence" value="ECO:0000318"/>
    <property type="project" value="GO_Central"/>
</dbReference>
<dbReference type="GO" id="GO:0061628">
    <property type="term" value="F:histone H3K27me3 reader activity"/>
    <property type="evidence" value="ECO:0007669"/>
    <property type="project" value="Ensembl"/>
</dbReference>
<dbReference type="GO" id="GO:0062072">
    <property type="term" value="F:histone H3K9me2/3 reader activity"/>
    <property type="evidence" value="ECO:0007669"/>
    <property type="project" value="Ensembl"/>
</dbReference>
<dbReference type="GO" id="GO:0035064">
    <property type="term" value="F:methylated histone binding"/>
    <property type="evidence" value="ECO:0007669"/>
    <property type="project" value="Ensembl"/>
</dbReference>
<dbReference type="GO" id="GO:0003714">
    <property type="term" value="F:transcription corepressor activity"/>
    <property type="evidence" value="ECO:0000318"/>
    <property type="project" value="GO_Central"/>
</dbReference>
<dbReference type="CDD" id="cd18634">
    <property type="entry name" value="CD_CDY"/>
    <property type="match status" value="1"/>
</dbReference>
<dbReference type="CDD" id="cd06558">
    <property type="entry name" value="crotonase-like"/>
    <property type="match status" value="1"/>
</dbReference>
<dbReference type="FunFam" id="2.40.50.40:FF:000018">
    <property type="entry name" value="Chromodomain Y like 2"/>
    <property type="match status" value="1"/>
</dbReference>
<dbReference type="FunFam" id="3.90.226.10:FF:000012">
    <property type="entry name" value="Chromodomain Y-like protein 2"/>
    <property type="match status" value="1"/>
</dbReference>
<dbReference type="Gene3D" id="2.40.50.40">
    <property type="match status" value="1"/>
</dbReference>
<dbReference type="Gene3D" id="3.90.226.10">
    <property type="entry name" value="2-enoyl-CoA Hydratase, Chain A, domain 1"/>
    <property type="match status" value="1"/>
</dbReference>
<dbReference type="Gene3D" id="1.10.12.10">
    <property type="entry name" value="Lyase 2-enoyl-coa Hydratase, Chain A, domain 2"/>
    <property type="match status" value="1"/>
</dbReference>
<dbReference type="InterPro" id="IPR016197">
    <property type="entry name" value="Chromo-like_dom_sf"/>
</dbReference>
<dbReference type="InterPro" id="IPR000953">
    <property type="entry name" value="Chromo/chromo_shadow_dom"/>
</dbReference>
<dbReference type="InterPro" id="IPR023780">
    <property type="entry name" value="Chromo_domain"/>
</dbReference>
<dbReference type="InterPro" id="IPR023779">
    <property type="entry name" value="Chromodomain_CS"/>
</dbReference>
<dbReference type="InterPro" id="IPR029045">
    <property type="entry name" value="ClpP/crotonase-like_dom_sf"/>
</dbReference>
<dbReference type="InterPro" id="IPR051053">
    <property type="entry name" value="ECH/Chromodomain_protein"/>
</dbReference>
<dbReference type="InterPro" id="IPR001753">
    <property type="entry name" value="Enoyl-CoA_hydra/iso"/>
</dbReference>
<dbReference type="InterPro" id="IPR014748">
    <property type="entry name" value="Enoyl-CoA_hydra_C"/>
</dbReference>
<dbReference type="PANTHER" id="PTHR43684">
    <property type="match status" value="1"/>
</dbReference>
<dbReference type="PANTHER" id="PTHR43684:SF2">
    <property type="entry name" value="CHROMODOMAIN Y-LIKE PROTEIN 2"/>
    <property type="match status" value="1"/>
</dbReference>
<dbReference type="Pfam" id="PF00385">
    <property type="entry name" value="Chromo"/>
    <property type="match status" value="1"/>
</dbReference>
<dbReference type="Pfam" id="PF00378">
    <property type="entry name" value="ECH_1"/>
    <property type="match status" value="1"/>
</dbReference>
<dbReference type="SMART" id="SM00298">
    <property type="entry name" value="CHROMO"/>
    <property type="match status" value="1"/>
</dbReference>
<dbReference type="SUPFAM" id="SSF54160">
    <property type="entry name" value="Chromo domain-like"/>
    <property type="match status" value="1"/>
</dbReference>
<dbReference type="SUPFAM" id="SSF52096">
    <property type="entry name" value="ClpP/crotonase"/>
    <property type="match status" value="1"/>
</dbReference>
<dbReference type="PROSITE" id="PS00598">
    <property type="entry name" value="CHROMO_1"/>
    <property type="match status" value="1"/>
</dbReference>
<dbReference type="PROSITE" id="PS50013">
    <property type="entry name" value="CHROMO_2"/>
    <property type="match status" value="1"/>
</dbReference>
<name>CDYL2_HUMAN</name>
<gene>
    <name type="primary">CDYL2</name>
</gene>